<accession>P29131</accession>
<accession>Q2M8M9</accession>
<dbReference type="EMBL" id="L14281">
    <property type="protein sequence ID" value="AAA23814.1"/>
    <property type="molecule type" value="Genomic_DNA"/>
</dbReference>
<dbReference type="EMBL" id="L06547">
    <property type="protein sequence ID" value="AAA23935.1"/>
    <property type="status" value="ALT_FRAME"/>
    <property type="molecule type" value="Genomic_DNA"/>
</dbReference>
<dbReference type="EMBL" id="L19201">
    <property type="protein sequence ID" value="AAB03065.1"/>
    <property type="molecule type" value="Genomic_DNA"/>
</dbReference>
<dbReference type="EMBL" id="U00096">
    <property type="protein sequence ID" value="AAC76915.1"/>
    <property type="molecule type" value="Genomic_DNA"/>
</dbReference>
<dbReference type="EMBL" id="AP009048">
    <property type="protein sequence ID" value="BAE77377.1"/>
    <property type="molecule type" value="Genomic_DNA"/>
</dbReference>
<dbReference type="PIR" id="S40876">
    <property type="entry name" value="S40876"/>
</dbReference>
<dbReference type="RefSeq" id="NP_418368.1">
    <property type="nucleotide sequence ID" value="NC_000913.3"/>
</dbReference>
<dbReference type="RefSeq" id="WP_000068828.1">
    <property type="nucleotide sequence ID" value="NZ_SSZK01000014.1"/>
</dbReference>
<dbReference type="PDB" id="1UTA">
    <property type="method" value="NMR"/>
    <property type="chains" value="A=243-319"/>
</dbReference>
<dbReference type="PDB" id="6YN0">
    <property type="method" value="X-ray"/>
    <property type="resolution" value="2.40 A"/>
    <property type="chains" value="B=75-93"/>
</dbReference>
<dbReference type="PDBsum" id="1UTA"/>
<dbReference type="PDBsum" id="6YN0"/>
<dbReference type="BMRB" id="P29131"/>
<dbReference type="SMR" id="P29131"/>
<dbReference type="BioGRID" id="4261592">
    <property type="interactions" value="208"/>
</dbReference>
<dbReference type="BioGRID" id="852725">
    <property type="interactions" value="3"/>
</dbReference>
<dbReference type="ComplexPortal" id="CPX-1936">
    <property type="entry name" value="Divisome complex"/>
</dbReference>
<dbReference type="DIP" id="DIP-9705N"/>
<dbReference type="FunCoup" id="P29131">
    <property type="interactions" value="52"/>
</dbReference>
<dbReference type="IntAct" id="P29131">
    <property type="interactions" value="24"/>
</dbReference>
<dbReference type="MINT" id="P29131"/>
<dbReference type="STRING" id="511145.b3933"/>
<dbReference type="jPOST" id="P29131"/>
<dbReference type="PaxDb" id="511145-b3933"/>
<dbReference type="EnsemblBacteria" id="AAC76915">
    <property type="protein sequence ID" value="AAC76915"/>
    <property type="gene ID" value="b3933"/>
</dbReference>
<dbReference type="GeneID" id="948428"/>
<dbReference type="KEGG" id="ecj:JW3904"/>
<dbReference type="KEGG" id="eco:b3933"/>
<dbReference type="PATRIC" id="fig|511145.12.peg.4051"/>
<dbReference type="EchoBASE" id="EB1491"/>
<dbReference type="eggNOG" id="COG3087">
    <property type="taxonomic scope" value="Bacteria"/>
</dbReference>
<dbReference type="HOGENOM" id="CLU_058902_0_0_6"/>
<dbReference type="InParanoid" id="P29131"/>
<dbReference type="OMA" id="NRPEEVW"/>
<dbReference type="OrthoDB" id="8558195at2"/>
<dbReference type="PhylomeDB" id="P29131"/>
<dbReference type="BioCyc" id="EcoCyc:EG11529-MONOMER"/>
<dbReference type="BioCyc" id="MetaCyc:EG11529-MONOMER"/>
<dbReference type="EvolutionaryTrace" id="P29131"/>
<dbReference type="PRO" id="PR:P29131"/>
<dbReference type="Proteomes" id="UP000000625">
    <property type="component" value="Chromosome"/>
</dbReference>
<dbReference type="GO" id="GO:0032153">
    <property type="term" value="C:cell division site"/>
    <property type="evidence" value="ECO:0000303"/>
    <property type="project" value="ComplexPortal"/>
</dbReference>
<dbReference type="GO" id="GO:0030428">
    <property type="term" value="C:cell septum"/>
    <property type="evidence" value="ECO:0000314"/>
    <property type="project" value="CACAO"/>
</dbReference>
<dbReference type="GO" id="GO:0000935">
    <property type="term" value="C:division septum"/>
    <property type="evidence" value="ECO:0000314"/>
    <property type="project" value="EcoCyc"/>
</dbReference>
<dbReference type="GO" id="GO:1990586">
    <property type="term" value="C:divisome complex"/>
    <property type="evidence" value="ECO:0000303"/>
    <property type="project" value="ComplexPortal"/>
</dbReference>
<dbReference type="GO" id="GO:0005886">
    <property type="term" value="C:plasma membrane"/>
    <property type="evidence" value="ECO:0000314"/>
    <property type="project" value="EcoCyc"/>
</dbReference>
<dbReference type="GO" id="GO:0042834">
    <property type="term" value="F:peptidoglycan binding"/>
    <property type="evidence" value="ECO:0007669"/>
    <property type="project" value="InterPro"/>
</dbReference>
<dbReference type="GO" id="GO:0051301">
    <property type="term" value="P:cell division"/>
    <property type="evidence" value="ECO:0000314"/>
    <property type="project" value="CACAO"/>
</dbReference>
<dbReference type="GO" id="GO:0000917">
    <property type="term" value="P:division septum assembly"/>
    <property type="evidence" value="ECO:0000315"/>
    <property type="project" value="EcoCyc"/>
</dbReference>
<dbReference type="GO" id="GO:0043093">
    <property type="term" value="P:FtsZ-dependent cytokinesis"/>
    <property type="evidence" value="ECO:0000303"/>
    <property type="project" value="ComplexPortal"/>
</dbReference>
<dbReference type="DisProt" id="DP02271"/>
<dbReference type="FunFam" id="3.30.70.1070:FF:000002">
    <property type="entry name" value="Cell division protein FtsN"/>
    <property type="match status" value="1"/>
</dbReference>
<dbReference type="Gene3D" id="3.30.70.1070">
    <property type="entry name" value="Sporulation related repeat"/>
    <property type="match status" value="1"/>
</dbReference>
<dbReference type="HAMAP" id="MF_02039">
    <property type="entry name" value="FtsN_entero"/>
    <property type="match status" value="1"/>
</dbReference>
<dbReference type="InterPro" id="IPR052521">
    <property type="entry name" value="Cell_div_SPOR-domain"/>
</dbReference>
<dbReference type="InterPro" id="IPR011930">
    <property type="entry name" value="FtsN"/>
</dbReference>
<dbReference type="InterPro" id="IPR007730">
    <property type="entry name" value="SPOR-like_dom"/>
</dbReference>
<dbReference type="InterPro" id="IPR036680">
    <property type="entry name" value="SPOR-like_sf"/>
</dbReference>
<dbReference type="NCBIfam" id="TIGR02223">
    <property type="entry name" value="ftsN"/>
    <property type="match status" value="1"/>
</dbReference>
<dbReference type="NCBIfam" id="NF008179">
    <property type="entry name" value="PRK10927.1"/>
    <property type="match status" value="1"/>
</dbReference>
<dbReference type="PANTHER" id="PTHR38687">
    <property type="entry name" value="CELL DIVISION PROTEIN DEDD-RELATED"/>
    <property type="match status" value="1"/>
</dbReference>
<dbReference type="PANTHER" id="PTHR38687:SF2">
    <property type="entry name" value="CELL DIVISION PROTEIN FTSN"/>
    <property type="match status" value="1"/>
</dbReference>
<dbReference type="Pfam" id="PF05036">
    <property type="entry name" value="SPOR"/>
    <property type="match status" value="1"/>
</dbReference>
<dbReference type="SUPFAM" id="SSF110997">
    <property type="entry name" value="Sporulation related repeat"/>
    <property type="match status" value="1"/>
</dbReference>
<dbReference type="PROSITE" id="PS51724">
    <property type="entry name" value="SPOR"/>
    <property type="match status" value="1"/>
</dbReference>
<name>FTSN_ECOLI</name>
<comment type="function">
    <text evidence="5 15 20 21">Essential cell division protein that activates septal peptidoglycan synthesis and constriction of the cell. Acts on both sides of the membrane, via interaction with FtsA in the cytoplasm and interaction with the FtsQBL complex in the periplasm. These interactions may induce a conformational switch in both FtsA and FtsQBL, leading to septal peptidoglycan synthesis by FtsI and associated synthases (Probable) (PubMed:25496160). Required for full FtsI activity (PubMed:25496160). Required for recruitment of AmiC to the septal ring (PubMed:12787347).</text>
</comment>
<comment type="subunit">
    <text evidence="8 11 12 14 15 16">Interacts with FtsA via its N-terminal cytoplasmic domain (PubMed:22328664, PubMed:24750258, PubMed:25496160, PubMed:25496259). Interacts with ZapA, FtsQ, FtsW and FtsI (PubMed:17185541, PubMed:20497333).</text>
</comment>
<comment type="interaction">
    <interactant intactId="EBI-1134233">
        <id>P29131</id>
    </interactant>
    <interactant intactId="EBI-6419495">
        <id>P56976</id>
        <label>blr</label>
    </interactant>
    <organismsDiffer>false</organismsDiffer>
    <experiments>3</experiments>
</comment>
<comment type="interaction">
    <interactant intactId="EBI-1134233">
        <id>P29131</id>
    </interactant>
    <interactant intactId="EBI-550562">
        <id>P0ABH0</id>
        <label>ftsA</label>
    </interactant>
    <organismsDiffer>false</organismsDiffer>
    <experiments>7</experiments>
</comment>
<comment type="interaction">
    <interactant intactId="EBI-1134233">
        <id>P29131</id>
    </interactant>
    <interactant intactId="EBI-548564">
        <id>P0AD68</id>
        <label>ftsI</label>
    </interactant>
    <organismsDiffer>false</organismsDiffer>
    <experiments>3</experiments>
</comment>
<comment type="interaction">
    <interactant intactId="EBI-1134233">
        <id>P29131</id>
    </interactant>
    <interactant intactId="EBI-1130157">
        <id>P06136</id>
        <label>ftsQ</label>
    </interactant>
    <organismsDiffer>false</organismsDiffer>
    <experiments>7</experiments>
</comment>
<comment type="interaction">
    <interactant intactId="EBI-1134233">
        <id>P29131</id>
    </interactant>
    <interactant intactId="EBI-1214767">
        <id>P0ABG4</id>
        <label>ftsW</label>
    </interactant>
    <organismsDiffer>false</organismsDiffer>
    <experiments>3</experiments>
</comment>
<comment type="interaction">
    <interactant intactId="EBI-1134233">
        <id>P29131</id>
    </interactant>
    <interactant intactId="EBI-909769">
        <id>P02919</id>
        <label>mrcB</label>
    </interactant>
    <organismsDiffer>false</organismsDiffer>
    <experiments>7</experiments>
</comment>
<comment type="subcellular location">
    <subcellularLocation>
        <location evidence="17">Cell inner membrane</location>
        <topology evidence="17">Single-pass type II membrane protein</topology>
    </subcellularLocation>
    <text evidence="4 9 14 18">Localizes to the septum (PubMed:19684127, PubMed:24750258, PubMed:9282742). Localizes to the midcell via interaction with the early cell division protein FtsA and via the periplasmic SPOR domain (PubMed:19684127, PubMed:24750258, PubMed:9282742). FtsA-dependent localization precedes SPOR-dependent localization, and both are needed for efficient localization (PubMed:24750258). Localization depends upon FtsZ, FtsA, ZipA, FtsQ and FtsI (PubMed:11948172, PubMed:9282742).</text>
</comment>
<comment type="domain">
    <text evidence="6 7 9 13 14">The cytoplasmic region is required for interaction with FtsA (PubMed:24750258). The periplasmic region is composed of a membrane-proximal region containing three short partially formed helices (H1, H2 and H3), followed by an unstructured glutamine-rich linker, and a C-terminal globular SPOR domain (PubMed:15101973, PubMed:19684127). Essential function of FtsN is accomplished by a small region of at most 35 residues that is centered about the H2 helix (PubMed:19684127). The SPOR domain, which exhibits a ribonucleoprotein (RNP) fold, binds peptidoglycan and is a strong septal localization determinant, but it seems not essential for cell division (PubMed:15466024, PubMed:19684127, PubMed:24056104).</text>
</comment>
<comment type="disruption phenotype">
    <text evidence="3 10">Depletion does not affect localization of FtsZ, FtsA, ZipA, FtsQ, FtsL and FtsI to the division site (PubMed:11703663). Cells containing low levels of FtsN stop dividing while their mean cell length increases (PubMed:20345660). Absence of FtsN is followed by an inverse sequential disassembly of already assembled divisome compounds (PubMed:20345660).</text>
</comment>
<comment type="similarity">
    <text evidence="1 19">Belongs to the FtsN family.</text>
</comment>
<comment type="sequence caution" evidence="19">
    <conflict type="frameshift">
        <sequence resource="EMBL-CDS" id="AAA23935"/>
    </conflict>
</comment>
<keyword id="KW-0002">3D-structure</keyword>
<keyword id="KW-0131">Cell cycle</keyword>
<keyword id="KW-0132">Cell division</keyword>
<keyword id="KW-0997">Cell inner membrane</keyword>
<keyword id="KW-1003">Cell membrane</keyword>
<keyword id="KW-1015">Disulfide bond</keyword>
<keyword id="KW-0472">Membrane</keyword>
<keyword id="KW-1185">Reference proteome</keyword>
<keyword id="KW-0677">Repeat</keyword>
<keyword id="KW-0717">Septation</keyword>
<keyword id="KW-0812">Transmembrane</keyword>
<keyword id="KW-1133">Transmembrane helix</keyword>
<proteinExistence type="evidence at protein level"/>
<gene>
    <name evidence="1" type="primary">ftsN</name>
    <name type="synonym">msgA</name>
    <name type="ordered locus">b3933</name>
    <name type="ordered locus">JW3904</name>
</gene>
<evidence type="ECO:0000255" key="1">
    <source>
        <dbReference type="HAMAP-Rule" id="MF_02039"/>
    </source>
</evidence>
<evidence type="ECO:0000256" key="2">
    <source>
        <dbReference type="SAM" id="MobiDB-lite"/>
    </source>
</evidence>
<evidence type="ECO:0000269" key="3">
    <source>
    </source>
</evidence>
<evidence type="ECO:0000269" key="4">
    <source>
    </source>
</evidence>
<evidence type="ECO:0000269" key="5">
    <source>
    </source>
</evidence>
<evidence type="ECO:0000269" key="6">
    <source>
    </source>
</evidence>
<evidence type="ECO:0000269" key="7">
    <source>
    </source>
</evidence>
<evidence type="ECO:0000269" key="8">
    <source>
    </source>
</evidence>
<evidence type="ECO:0000269" key="9">
    <source>
    </source>
</evidence>
<evidence type="ECO:0000269" key="10">
    <source>
    </source>
</evidence>
<evidence type="ECO:0000269" key="11">
    <source>
    </source>
</evidence>
<evidence type="ECO:0000269" key="12">
    <source>
    </source>
</evidence>
<evidence type="ECO:0000269" key="13">
    <source>
    </source>
</evidence>
<evidence type="ECO:0000269" key="14">
    <source>
    </source>
</evidence>
<evidence type="ECO:0000269" key="15">
    <source>
    </source>
</evidence>
<evidence type="ECO:0000269" key="16">
    <source>
    </source>
</evidence>
<evidence type="ECO:0000269" key="17">
    <source>
    </source>
</evidence>
<evidence type="ECO:0000269" key="18">
    <source>
    </source>
</evidence>
<evidence type="ECO:0000305" key="19"/>
<evidence type="ECO:0000305" key="20">
    <source>
    </source>
</evidence>
<evidence type="ECO:0000305" key="21">
    <source>
    </source>
</evidence>
<evidence type="ECO:0000305" key="22">
    <source>
    </source>
</evidence>
<evidence type="ECO:0007829" key="23">
    <source>
        <dbReference type="PDB" id="1UTA"/>
    </source>
</evidence>
<evidence type="ECO:0007829" key="24">
    <source>
        <dbReference type="PDB" id="6YN0"/>
    </source>
</evidence>
<reference key="1">
    <citation type="journal article" date="1993" name="J. Bacteriol.">
        <title>Cloning and characterization of ftsN, an essential cell division gene in Escherichia coli isolated as a multicopy suppressor of ftsA12(Ts).</title>
        <authorList>
            <person name="Dai K."/>
            <person name="Xu Y."/>
            <person name="Lutkenhaus J."/>
        </authorList>
    </citation>
    <scope>NUCLEOTIDE SEQUENCE [GENOMIC DNA]</scope>
</reference>
<reference key="2">
    <citation type="submission" date="1992-11" db="EMBL/GenBank/DDBJ databases">
        <authorList>
            <person name="Wu B."/>
            <person name="Ang D."/>
        </authorList>
    </citation>
    <scope>NUCLEOTIDE SEQUENCE [GENOMIC DNA]</scope>
    <source>
        <strain>XPH43</strain>
    </source>
</reference>
<reference key="3">
    <citation type="journal article" date="1993" name="Nucleic Acids Res.">
        <title>Analysis of the Escherichia coli genome. III. DNA sequence of the region from 87.2 to 89.2 minutes.</title>
        <authorList>
            <person name="Plunkett G. III"/>
            <person name="Burland V."/>
            <person name="Daniels D.L."/>
            <person name="Blattner F.R."/>
        </authorList>
    </citation>
    <scope>NUCLEOTIDE SEQUENCE [LARGE SCALE GENOMIC DNA]</scope>
    <source>
        <strain>K12 / MG1655 / ATCC 47076</strain>
    </source>
</reference>
<reference key="4">
    <citation type="journal article" date="1997" name="Science">
        <title>The complete genome sequence of Escherichia coli K-12.</title>
        <authorList>
            <person name="Blattner F.R."/>
            <person name="Plunkett G. III"/>
            <person name="Bloch C.A."/>
            <person name="Perna N.T."/>
            <person name="Burland V."/>
            <person name="Riley M."/>
            <person name="Collado-Vides J."/>
            <person name="Glasner J.D."/>
            <person name="Rode C.K."/>
            <person name="Mayhew G.F."/>
            <person name="Gregor J."/>
            <person name="Davis N.W."/>
            <person name="Kirkpatrick H.A."/>
            <person name="Goeden M.A."/>
            <person name="Rose D.J."/>
            <person name="Mau B."/>
            <person name="Shao Y."/>
        </authorList>
    </citation>
    <scope>NUCLEOTIDE SEQUENCE [LARGE SCALE GENOMIC DNA]</scope>
    <source>
        <strain>K12 / MG1655 / ATCC 47076</strain>
    </source>
</reference>
<reference key="5">
    <citation type="journal article" date="2006" name="Mol. Syst. Biol.">
        <title>Highly accurate genome sequences of Escherichia coli K-12 strains MG1655 and W3110.</title>
        <authorList>
            <person name="Hayashi K."/>
            <person name="Morooka N."/>
            <person name="Yamamoto Y."/>
            <person name="Fujita K."/>
            <person name="Isono K."/>
            <person name="Choi S."/>
            <person name="Ohtsubo E."/>
            <person name="Baba T."/>
            <person name="Wanner B.L."/>
            <person name="Mori H."/>
            <person name="Horiuchi T."/>
        </authorList>
    </citation>
    <scope>NUCLEOTIDE SEQUENCE [LARGE SCALE GENOMIC DNA]</scope>
    <source>
        <strain>K12 / W3110 / ATCC 27325 / DSM 5911</strain>
    </source>
</reference>
<reference key="6">
    <citation type="journal article" date="1996" name="J. Bacteriol.">
        <title>Topological characterization of the essential Escherichia coli cell division protein FtsN.</title>
        <authorList>
            <person name="Dai K."/>
            <person name="Xu Y."/>
            <person name="Lutkenhaus J."/>
        </authorList>
    </citation>
    <scope>SUBCELLULAR LOCATION</scope>
    <scope>TOPOLOGY</scope>
    <source>
        <strain>K12</strain>
    </source>
</reference>
<reference key="7">
    <citation type="journal article" date="1997" name="Mol. Microbiol.">
        <title>FtsN, a late recruit to the septum in Escherichia coli.</title>
        <authorList>
            <person name="Addinall S.G."/>
            <person name="Cao C."/>
            <person name="Lutkenhaus J."/>
        </authorList>
    </citation>
    <scope>SUBCELLULAR LOCATION</scope>
    <source>
        <strain>K12</strain>
    </source>
</reference>
<reference key="8">
    <citation type="journal article" date="2001" name="Mol. Microbiol.">
        <title>FtsQ, FtsL and FtsI require FtsK, but not FtsN, for co-localization with FtsZ during Escherichia coli cell division.</title>
        <authorList>
            <person name="Chen J.C."/>
            <person name="Beckwith J."/>
        </authorList>
    </citation>
    <scope>DISRUPTION PHENOTYPE</scope>
</reference>
<reference key="9">
    <citation type="journal article" date="2002" name="J. Bacteriol.">
        <title>ZipA is required for recruitment of FtsK, FtsQ, FtsL, and FtsN to the septal ring in Escherichia coli.</title>
        <authorList>
            <person name="Hale C.A."/>
            <person name="de Boer P.A.J."/>
        </authorList>
    </citation>
    <scope>SUBCELLULAR LOCATION</scope>
</reference>
<reference key="10">
    <citation type="journal article" date="2003" name="Mol. Microbiol.">
        <title>The Escherichia coli amidase AmiC is a periplasmic septal ring component exported via the twin-arginine transport pathway.</title>
        <authorList>
            <person name="Bernhardt T.G."/>
            <person name="de Boer P.A."/>
        </authorList>
    </citation>
    <scope>FUNCTION IN RECRUITMENT OF AMIC</scope>
    <source>
        <strain>K12</strain>
    </source>
</reference>
<reference key="11">
    <citation type="journal article" date="2004" name="J. Bacteriol.">
        <title>Murein (peptidoglycan) binding property of the essential cell division protein FtsN from Escherichia coli.</title>
        <authorList>
            <person name="Ursinus A."/>
            <person name="van den Ent F."/>
            <person name="Brechtel S."/>
            <person name="de Pedro M."/>
            <person name="Hoeltje J.V."/>
            <person name="Loewe J."/>
            <person name="Vollmer W."/>
        </authorList>
    </citation>
    <scope>DOMAIN</scope>
    <scope>BINDING TO PEPTIDOGLYCAN</scope>
</reference>
<reference key="12">
    <citation type="journal article" date="2007" name="Microbiology">
        <title>Three functional subdomains of the Escherichia coli FtsQ protein are involved in its interaction with the other division proteins.</title>
        <authorList>
            <person name="D'Ulisse V."/>
            <person name="Fagioli M."/>
            <person name="Ghelardini P."/>
            <person name="Paolozzi L."/>
        </authorList>
    </citation>
    <scope>INTERACTION WITH FTSQ</scope>
</reference>
<reference key="13">
    <citation type="journal article" date="2009" name="J. Bacteriol.">
        <title>Self-enhanced accumulation of FtsN at division sites and roles for other proteins with a SPOR domain (DamX, DedD, and RlpA) in Escherichia coli cell constriction.</title>
        <authorList>
            <person name="Gerding M.A."/>
            <person name="Liu B."/>
            <person name="Bendezu F.O."/>
            <person name="Hale C.A."/>
            <person name="Bernhardt T.G."/>
            <person name="de Boer P.A."/>
        </authorList>
    </citation>
    <scope>SUBCELLULAR LOCATION</scope>
    <scope>DOMAIN</scope>
</reference>
<reference key="14">
    <citation type="journal article" date="2010" name="Mol. Microbiol.">
        <title>Direct interactions of early and late assembling division proteins in Escherichia coli cells resolved by FRET.</title>
        <authorList>
            <person name="Alexeeva S."/>
            <person name="Gadella T.W. Jr."/>
            <person name="Verheul J."/>
            <person name="Verhoeven G.S."/>
            <person name="den Blaauwen T."/>
        </authorList>
    </citation>
    <scope>INTERACTION WITH ZAPA; FTSW AND FTSI</scope>
</reference>
<reference key="15">
    <citation type="journal article" date="2010" name="Mol. Microbiol.">
        <title>Role of Escherichia coli FtsN protein in the assembly and stability of the cell division ring.</title>
        <authorList>
            <person name="Rico A.I."/>
            <person name="Garcia-Ovalle M."/>
            <person name="Palacios P."/>
            <person name="Casanova M."/>
            <person name="Vicente M."/>
        </authorList>
    </citation>
    <scope>DISRUPTION PHENOTYPE</scope>
</reference>
<reference key="16">
    <citation type="journal article" date="2012" name="J. Bacteriol.">
        <title>The early divisome protein FtsA interacts directly through its 1c subdomain with the cytoplasmic domain of the late divisome protein FtsN.</title>
        <authorList>
            <person name="Busiek K.K."/>
            <person name="Eraso J.M."/>
            <person name="Wang Y."/>
            <person name="Margolin W."/>
        </authorList>
    </citation>
    <scope>INTERACTION WITH FTSA</scope>
</reference>
<reference key="17">
    <citation type="journal article" date="2013" name="J. Bacteriol.">
        <title>Identification of SPOR domain amino acids important for septal localization, peptidoglycan binding, and a disulfide bond in the cell division protein FtsN.</title>
        <authorList>
            <person name="Duncan T.R."/>
            <person name="Yahashiri A."/>
            <person name="Arends S.J."/>
            <person name="Popham D.L."/>
            <person name="Weiss D.S."/>
        </authorList>
    </citation>
    <scope>DOMAIN</scope>
    <scope>DISULFIDE BOND</scope>
    <scope>MUTAGENESIS OF GLN-251; CYS-252; SER-254; THR-263; PHE-270; TRP-283; ARG-285; CYS-312 AND ILE-313</scope>
</reference>
<reference key="18">
    <citation type="journal article" date="2014" name="Mol. Microbiol.">
        <title>A role for FtsA in SPOR-independent localization of the essential Escherichia coli cell division protein FtsN.</title>
        <authorList>
            <person name="Busiek K.K."/>
            <person name="Margolin W."/>
        </authorList>
    </citation>
    <scope>INTERACTION WITH FTSA</scope>
    <scope>SUBCELLULAR LOCATION</scope>
    <scope>DOMAIN</scope>
</reference>
<reference key="19">
    <citation type="journal article" date="2015" name="Mol. Microbiol.">
        <title>A role for the FtsQLB complex in cytokinetic ring activation revealed by an ftsL allele that accelerates division.</title>
        <authorList>
            <person name="Tsang M.J."/>
            <person name="Bernhardt T.G."/>
        </authorList>
    </citation>
    <scope>FUNCTION</scope>
</reference>
<reference key="20">
    <citation type="journal article" date="2015" name="Mol. Microbiol.">
        <title>Roles for both FtsA and the FtsBLQ subcomplex in FtsN-stimulated cell constriction in Escherichia coli.</title>
        <authorList>
            <person name="Liu B."/>
            <person name="Persons L."/>
            <person name="Lee L."/>
            <person name="de Boer P.A."/>
        </authorList>
    </citation>
    <scope>FUNCTION</scope>
    <scope>INTERACTION WITH FTSA</scope>
    <scope>MUTAGENESIS OF TRP-83; TYR-85 AND LEU-89</scope>
</reference>
<reference key="21">
    <citation type="journal article" date="2015" name="Mol. Microbiol.">
        <title>The bypass of ZipA by overexpression of FtsN requires a previously unknown conserved FtsN motif essential for FtsA-FtsN interaction supporting a model in which FtsA monomers recruit late cell division proteins to the Z ring.</title>
        <authorList>
            <person name="Pichoff S."/>
            <person name="Du S."/>
            <person name="Lutkenhaus J."/>
        </authorList>
    </citation>
    <scope>INTERACTION WITH FTSA</scope>
    <scope>MUTAGENESIS OF ASP-5</scope>
</reference>
<reference key="22">
    <citation type="journal article" date="2015" name="Mol. Microbiol.">
        <title>Last but not least: new insights into how FtsN triggers constriction during Escherichia coli cell division.</title>
        <authorList>
            <person name="Weiss D.S."/>
        </authorList>
    </citation>
    <scope>FUNCTION</scope>
    <scope>REVIEW</scope>
</reference>
<reference key="23">
    <citation type="journal article" date="2004" name="Mol. Microbiol.">
        <title>Solution structure and domain architecture of the divisome protein FtsN.</title>
        <authorList>
            <person name="Yang J.C."/>
            <person name="Van Den Ent F."/>
            <person name="Neuhaus D."/>
            <person name="Brevier J."/>
            <person name="Lowe J."/>
        </authorList>
    </citation>
    <scope>STRUCTURE BY NMR OF 243-319</scope>
    <scope>DOMAIN</scope>
</reference>
<protein>
    <recommendedName>
        <fullName evidence="1 19">Cell division protein FtsN</fullName>
    </recommendedName>
</protein>
<sequence length="319" mass="35793">MAQRDYVRRSQPAPSRRKKSTSRKKQRNLPAVSPAMVAIAAAVLVTFIGGLYFITHHKKEESETLQSQKVTGNGLPPKPEERWRYIKELESRQPGVRAPTEPSAGGEVKTPEQLTPEQRQLLEQMQADMRQQPTQLVEVPWNEQTPEQRQQTLQRQRQAQQLAEQQRLAQQSRTTEQSWQQQTRTSQAAPVQAQPRQSKPASSQQPYQDLLQTPAHTTAQSKPQQAAPVARAADAPKPTAEKKDERRWMVQCGSFRGAEQAETVRAQLAFEGFDSKITTNNGWNRVVIGPVKGKENADSTLNRLKMAGHTNCIRLAAGG</sequence>
<organism>
    <name type="scientific">Escherichia coli (strain K12)</name>
    <dbReference type="NCBI Taxonomy" id="83333"/>
    <lineage>
        <taxon>Bacteria</taxon>
        <taxon>Pseudomonadati</taxon>
        <taxon>Pseudomonadota</taxon>
        <taxon>Gammaproteobacteria</taxon>
        <taxon>Enterobacterales</taxon>
        <taxon>Enterobacteriaceae</taxon>
        <taxon>Escherichia</taxon>
    </lineage>
</organism>
<feature type="chain" id="PRO_0000087376" description="Cell division protein FtsN">
    <location>
        <begin position="1"/>
        <end position="319"/>
    </location>
</feature>
<feature type="topological domain" description="Cytoplasmic" evidence="1 22">
    <location>
        <begin position="1"/>
        <end position="33"/>
    </location>
</feature>
<feature type="transmembrane region" description="Helical" evidence="1">
    <location>
        <begin position="34"/>
        <end position="54"/>
    </location>
</feature>
<feature type="topological domain" description="Periplasmic" evidence="1 22">
    <location>
        <begin position="55"/>
        <end position="319"/>
    </location>
</feature>
<feature type="repeat" description="1-1">
    <location>
        <begin position="115"/>
        <end position="120"/>
    </location>
</feature>
<feature type="repeat" description="1-2">
    <location>
        <begin position="145"/>
        <end position="150"/>
    </location>
</feature>
<feature type="repeat" description="2-1">
    <location>
        <begin position="197"/>
        <end position="200"/>
    </location>
</feature>
<feature type="repeat" description="2-2">
    <location>
        <begin position="220"/>
        <end position="223"/>
    </location>
</feature>
<feature type="domain" description="SPOR" evidence="1">
    <location>
        <begin position="242"/>
        <end position="316"/>
    </location>
</feature>
<feature type="region of interest" description="Disordered" evidence="2">
    <location>
        <begin position="1"/>
        <end position="30"/>
    </location>
</feature>
<feature type="region of interest" description="Mediates interaction with FtsA" evidence="1 16">
    <location>
        <begin position="4"/>
        <end position="6"/>
    </location>
</feature>
<feature type="region of interest" description="Disordered" evidence="2">
    <location>
        <begin position="60"/>
        <end position="79"/>
    </location>
</feature>
<feature type="region of interest" description="Disordered" evidence="2">
    <location>
        <begin position="89"/>
        <end position="113"/>
    </location>
</feature>
<feature type="region of interest" description="2 X 6 AA repeats">
    <location>
        <begin position="115"/>
        <end position="150"/>
    </location>
</feature>
<feature type="region of interest" description="Disordered" evidence="2">
    <location>
        <begin position="140"/>
        <end position="245"/>
    </location>
</feature>
<feature type="region of interest" description="2 X 4 AA repeats">
    <location>
        <begin position="197"/>
        <end position="223"/>
    </location>
</feature>
<feature type="compositionally biased region" description="Basic residues" evidence="2">
    <location>
        <begin position="15"/>
        <end position="27"/>
    </location>
</feature>
<feature type="compositionally biased region" description="Low complexity" evidence="2">
    <location>
        <begin position="143"/>
        <end position="171"/>
    </location>
</feature>
<feature type="compositionally biased region" description="Polar residues" evidence="2">
    <location>
        <begin position="172"/>
        <end position="221"/>
    </location>
</feature>
<feature type="compositionally biased region" description="Low complexity" evidence="2">
    <location>
        <begin position="222"/>
        <end position="238"/>
    </location>
</feature>
<feature type="disulfide bond" evidence="1 13">
    <location>
        <begin position="252"/>
        <end position="312"/>
    </location>
</feature>
<feature type="mutagenesis site" description="Causes significant impairment of the interaction with FtsA." evidence="16">
    <original>D</original>
    <variation>N</variation>
    <location>
        <position position="5"/>
    </location>
</feature>
<feature type="mutagenesis site" description="Lack of activity." evidence="15">
    <original>W</original>
    <variation>L</variation>
    <variation>T</variation>
    <location>
        <position position="83"/>
    </location>
</feature>
<feature type="mutagenesis site" description="Lack of activity." evidence="15">
    <original>Y</original>
    <variation>S</variation>
    <variation>W</variation>
    <location>
        <position position="85"/>
    </location>
</feature>
<feature type="mutagenesis site" description="Lack of activity." evidence="15">
    <original>L</original>
    <variation>S</variation>
    <location>
        <position position="89"/>
    </location>
</feature>
<feature type="mutagenesis site" description="Reduces septal localization by a factor of at least 3." evidence="13">
    <original>Q</original>
    <variation>A</variation>
    <location>
        <position position="251"/>
    </location>
</feature>
<feature type="mutagenesis site" description="Severe localization defects. Binds peptidoglycan poorly." evidence="13">
    <original>Q</original>
    <variation>E</variation>
    <location>
        <position position="251"/>
    </location>
</feature>
<feature type="mutagenesis site" description="Severely reduces stability of the protein." evidence="13">
    <original>C</original>
    <variation>A</variation>
    <location>
        <position position="252"/>
    </location>
</feature>
<feature type="mutagenesis site" description="Reduces septal localization by a factor of at least 3." evidence="13">
    <original>S</original>
    <variation>A</variation>
    <location>
        <position position="254"/>
    </location>
</feature>
<feature type="mutagenesis site" description="Binds peptidoglycan poorly." evidence="13">
    <original>S</original>
    <variation>E</variation>
    <location>
        <position position="254"/>
    </location>
</feature>
<feature type="mutagenesis site" description="Intermediate localization defects." evidence="13">
    <original>T</original>
    <variation>D</variation>
    <location>
        <position position="263"/>
    </location>
</feature>
<feature type="mutagenesis site" description="Intermediate localization defects." evidence="13">
    <original>F</original>
    <variation>A</variation>
    <location>
        <position position="270"/>
    </location>
</feature>
<feature type="mutagenesis site" description="Reduces septal localization by a factor of at least 3." evidence="13">
    <original>W</original>
    <variation>A</variation>
    <location>
        <position position="283"/>
    </location>
</feature>
<feature type="mutagenesis site" description="Severe localization defects." evidence="13">
    <original>W</original>
    <variation>D</variation>
    <location>
        <position position="283"/>
    </location>
</feature>
<feature type="mutagenesis site" description="Reduces septal localization by a factor of at least 3. Binds peptidoglycan poorly." evidence="13">
    <original>R</original>
    <variation>A</variation>
    <location>
        <position position="285"/>
    </location>
</feature>
<feature type="mutagenesis site" description="Severely reduces stability of the protein." evidence="13">
    <original>C</original>
    <variation>A</variation>
    <location>
        <position position="312"/>
    </location>
</feature>
<feature type="mutagenesis site" description="Reduces septal localization by a factor of at least 3." evidence="13">
    <original>I</original>
    <variation>A</variation>
    <location>
        <position position="313"/>
    </location>
</feature>
<feature type="sequence conflict" description="In Ref. 1 and 2." evidence="19" ref="1 2">
    <original>L</original>
    <variation>V</variation>
    <location>
        <position position="29"/>
    </location>
</feature>
<feature type="helix" evidence="24">
    <location>
        <begin position="80"/>
        <end position="90"/>
    </location>
</feature>
<feature type="strand" evidence="23">
    <location>
        <begin position="254"/>
        <end position="256"/>
    </location>
</feature>
<feature type="helix" evidence="23">
    <location>
        <begin position="258"/>
        <end position="271"/>
    </location>
</feature>
<feature type="strand" evidence="23">
    <location>
        <begin position="275"/>
        <end position="279"/>
    </location>
</feature>
<feature type="strand" evidence="23">
    <location>
        <begin position="281"/>
        <end position="290"/>
    </location>
</feature>
<feature type="turn" evidence="23">
    <location>
        <begin position="293"/>
        <end position="295"/>
    </location>
</feature>
<feature type="helix" evidence="23">
    <location>
        <begin position="296"/>
        <end position="307"/>
    </location>
</feature>